<protein>
    <recommendedName>
        <fullName evidence="1">UDP-3-O-acylglucosamine N-acyltransferase</fullName>
        <ecNumber evidence="1">2.3.1.191</ecNumber>
    </recommendedName>
</protein>
<proteinExistence type="inferred from homology"/>
<keyword id="KW-0012">Acyltransferase</keyword>
<keyword id="KW-0441">Lipid A biosynthesis</keyword>
<keyword id="KW-0444">Lipid biosynthesis</keyword>
<keyword id="KW-0443">Lipid metabolism</keyword>
<keyword id="KW-0677">Repeat</keyword>
<keyword id="KW-0808">Transferase</keyword>
<evidence type="ECO:0000255" key="1">
    <source>
        <dbReference type="HAMAP-Rule" id="MF_00523"/>
    </source>
</evidence>
<dbReference type="EC" id="2.3.1.191" evidence="1"/>
<dbReference type="EMBL" id="CP000051">
    <property type="protein sequence ID" value="AAX50503.1"/>
    <property type="molecule type" value="Genomic_DNA"/>
</dbReference>
<dbReference type="RefSeq" id="WP_009871590.1">
    <property type="nucleotide sequence ID" value="NC_007429.1"/>
</dbReference>
<dbReference type="SMR" id="Q3KMB9"/>
<dbReference type="KEGG" id="cta:CTA_0265"/>
<dbReference type="HOGENOM" id="CLU_049865_0_0_0"/>
<dbReference type="UniPathway" id="UPA00973"/>
<dbReference type="Proteomes" id="UP000002532">
    <property type="component" value="Chromosome"/>
</dbReference>
<dbReference type="GO" id="GO:0016020">
    <property type="term" value="C:membrane"/>
    <property type="evidence" value="ECO:0007669"/>
    <property type="project" value="GOC"/>
</dbReference>
<dbReference type="GO" id="GO:0016410">
    <property type="term" value="F:N-acyltransferase activity"/>
    <property type="evidence" value="ECO:0007669"/>
    <property type="project" value="InterPro"/>
</dbReference>
<dbReference type="GO" id="GO:0009245">
    <property type="term" value="P:lipid A biosynthetic process"/>
    <property type="evidence" value="ECO:0007669"/>
    <property type="project" value="UniProtKB-UniRule"/>
</dbReference>
<dbReference type="CDD" id="cd03352">
    <property type="entry name" value="LbH_LpxD"/>
    <property type="match status" value="1"/>
</dbReference>
<dbReference type="Gene3D" id="1.20.5.170">
    <property type="match status" value="1"/>
</dbReference>
<dbReference type="Gene3D" id="2.160.10.10">
    <property type="entry name" value="Hexapeptide repeat proteins"/>
    <property type="match status" value="1"/>
</dbReference>
<dbReference type="Gene3D" id="3.40.1390.10">
    <property type="entry name" value="MurE/MurF, N-terminal domain"/>
    <property type="match status" value="1"/>
</dbReference>
<dbReference type="HAMAP" id="MF_00523">
    <property type="entry name" value="LpxD"/>
    <property type="match status" value="1"/>
</dbReference>
<dbReference type="InterPro" id="IPR001451">
    <property type="entry name" value="Hexapep"/>
</dbReference>
<dbReference type="InterPro" id="IPR007691">
    <property type="entry name" value="LpxD"/>
</dbReference>
<dbReference type="InterPro" id="IPR011004">
    <property type="entry name" value="Trimer_LpxA-like_sf"/>
</dbReference>
<dbReference type="InterPro" id="IPR020573">
    <property type="entry name" value="UDP_GlcNAc_AcTrfase_non-rep"/>
</dbReference>
<dbReference type="NCBIfam" id="TIGR01853">
    <property type="entry name" value="lipid_A_lpxD"/>
    <property type="match status" value="1"/>
</dbReference>
<dbReference type="NCBIfam" id="NF002060">
    <property type="entry name" value="PRK00892.1"/>
    <property type="match status" value="1"/>
</dbReference>
<dbReference type="PANTHER" id="PTHR43378">
    <property type="entry name" value="UDP-3-O-ACYLGLUCOSAMINE N-ACYLTRANSFERASE"/>
    <property type="match status" value="1"/>
</dbReference>
<dbReference type="PANTHER" id="PTHR43378:SF2">
    <property type="entry name" value="UDP-3-O-ACYLGLUCOSAMINE N-ACYLTRANSFERASE 1, MITOCHONDRIAL-RELATED"/>
    <property type="match status" value="1"/>
</dbReference>
<dbReference type="Pfam" id="PF00132">
    <property type="entry name" value="Hexapep"/>
    <property type="match status" value="2"/>
</dbReference>
<dbReference type="Pfam" id="PF04613">
    <property type="entry name" value="LpxD"/>
    <property type="match status" value="1"/>
</dbReference>
<dbReference type="SUPFAM" id="SSF51161">
    <property type="entry name" value="Trimeric LpxA-like enzymes"/>
    <property type="match status" value="1"/>
</dbReference>
<organism>
    <name type="scientific">Chlamydia trachomatis serovar A (strain ATCC VR-571B / DSM 19440 / HAR-13)</name>
    <dbReference type="NCBI Taxonomy" id="315277"/>
    <lineage>
        <taxon>Bacteria</taxon>
        <taxon>Pseudomonadati</taxon>
        <taxon>Chlamydiota</taxon>
        <taxon>Chlamydiia</taxon>
        <taxon>Chlamydiales</taxon>
        <taxon>Chlamydiaceae</taxon>
        <taxon>Chlamydia/Chlamydophila group</taxon>
        <taxon>Chlamydia</taxon>
    </lineage>
</organism>
<sequence length="354" mass="38404">MSQSTYSLEQLADFLKVEFQGNGATLLSGVEEIEEAKTAHITFLDNEKYAKHLKSSEAGAIIISRTQFQKYRDLNKNFLITSESPSLVFQKCLELFITPVDSGFPGIHPTAVIHPTAIIEDHVCIEPYAVVCQHAHVGSACHIGSGSVIGAYSTVGEHSYIHPRVVIRERVSIGKRVIIQPGAVIGSCGFGYVTSAFGQHKHLKHLGKVIIEDDVEIGANTTIDRGRFKHSVVREGSKIDNLVQIAHQVEVGQHSMIVAQAGIAGSTKIGNHVIIGGQAGITGHICIADHVIMMAQTGVTKSITSPGIYGGAPARPYQEIHRQVAKVRNLPRLEERIAALEKLVQKLEALSEQH</sequence>
<name>LPXD_CHLTA</name>
<reference key="1">
    <citation type="journal article" date="2005" name="Infect. Immun.">
        <title>Comparative genomic analysis of Chlamydia trachomatis oculotropic and genitotropic strains.</title>
        <authorList>
            <person name="Carlson J.H."/>
            <person name="Porcella S.F."/>
            <person name="McClarty G."/>
            <person name="Caldwell H.D."/>
        </authorList>
    </citation>
    <scope>NUCLEOTIDE SEQUENCE [LARGE SCALE GENOMIC DNA]</scope>
    <source>
        <strain>ATCC VR-571B / DSM 19440 / HAR-13</strain>
    </source>
</reference>
<accession>Q3KMB9</accession>
<feature type="chain" id="PRO_0000264356" description="UDP-3-O-acylglucosamine N-acyltransferase">
    <location>
        <begin position="1"/>
        <end position="354"/>
    </location>
</feature>
<feature type="active site" description="Proton acceptor" evidence="1">
    <location>
        <position position="247"/>
    </location>
</feature>
<gene>
    <name evidence="1" type="primary">lpxD</name>
    <name type="ordered locus">CTA_0265</name>
</gene>
<comment type="function">
    <text evidence="1">Catalyzes the N-acylation of UDP-3-O-acylglucosamine using 3-hydroxyacyl-ACP as the acyl donor. Is involved in the biosynthesis of lipid A, a phosphorylated glycolipid that anchors the lipopolysaccharide to the outer membrane of the cell.</text>
</comment>
<comment type="catalytic activity">
    <reaction evidence="1">
        <text>a UDP-3-O-[(3R)-3-hydroxyacyl]-alpha-D-glucosamine + a (3R)-hydroxyacyl-[ACP] = a UDP-2-N,3-O-bis[(3R)-3-hydroxyacyl]-alpha-D-glucosamine + holo-[ACP] + H(+)</text>
        <dbReference type="Rhea" id="RHEA:53836"/>
        <dbReference type="Rhea" id="RHEA-COMP:9685"/>
        <dbReference type="Rhea" id="RHEA-COMP:9945"/>
        <dbReference type="ChEBI" id="CHEBI:15378"/>
        <dbReference type="ChEBI" id="CHEBI:64479"/>
        <dbReference type="ChEBI" id="CHEBI:78827"/>
        <dbReference type="ChEBI" id="CHEBI:137740"/>
        <dbReference type="ChEBI" id="CHEBI:137748"/>
        <dbReference type="EC" id="2.3.1.191"/>
    </reaction>
</comment>
<comment type="pathway">
    <text evidence="1">Bacterial outer membrane biogenesis; LPS lipid A biosynthesis.</text>
</comment>
<comment type="subunit">
    <text evidence="1">Homotrimer.</text>
</comment>
<comment type="similarity">
    <text evidence="1">Belongs to the transferase hexapeptide repeat family. LpxD subfamily.</text>
</comment>